<dbReference type="EMBL" id="M15868">
    <property type="protein sequence ID" value="AAA40736.1"/>
    <property type="molecule type" value="mRNA"/>
</dbReference>
<dbReference type="EMBL" id="X00665">
    <property type="protein sequence ID" value="CAA25285.1"/>
    <property type="molecule type" value="mRNA"/>
</dbReference>
<dbReference type="EMBL" id="K02062">
    <property type="protein sequence ID" value="AAA40735.1"/>
    <property type="molecule type" value="Genomic_DNA"/>
</dbReference>
<dbReference type="EMBL" id="X01118">
    <property type="protein sequence ID" value="CAA25586.1"/>
    <property type="molecule type" value="mRNA"/>
</dbReference>
<dbReference type="EMBL" id="M27498">
    <property type="protein sequence ID" value="AAA40737.1"/>
    <property type="molecule type" value="mRNA"/>
</dbReference>
<dbReference type="PIR" id="A22570">
    <property type="entry name" value="AWRT"/>
</dbReference>
<dbReference type="RefSeq" id="NP_036744.1">
    <property type="nucleotide sequence ID" value="NM_012612.2"/>
</dbReference>
<dbReference type="PDB" id="1T34">
    <property type="method" value="X-ray"/>
    <property type="resolution" value="2.95 A"/>
    <property type="chains" value="H=129-149"/>
</dbReference>
<dbReference type="PDB" id="7BRG">
    <property type="method" value="X-ray"/>
    <property type="resolution" value="2.45 A"/>
    <property type="chains" value="L=123-150"/>
</dbReference>
<dbReference type="PDB" id="7BRL">
    <property type="method" value="X-ray"/>
    <property type="resolution" value="3.20 A"/>
    <property type="chains" value="L=126-139"/>
</dbReference>
<dbReference type="PDBsum" id="1T34"/>
<dbReference type="PDBsum" id="7BRG"/>
<dbReference type="PDBsum" id="7BRL"/>
<dbReference type="BMRB" id="P01161"/>
<dbReference type="SMR" id="P01161"/>
<dbReference type="FunCoup" id="P01161">
    <property type="interactions" value="139"/>
</dbReference>
<dbReference type="IntAct" id="P01161">
    <property type="interactions" value="1"/>
</dbReference>
<dbReference type="STRING" id="10116.ENSRNOP00000011005"/>
<dbReference type="BindingDB" id="P01161"/>
<dbReference type="ChEMBL" id="CHEMBL4287"/>
<dbReference type="iPTMnet" id="P01161"/>
<dbReference type="PhosphoSitePlus" id="P01161"/>
<dbReference type="PaxDb" id="10116-ENSRNOP00000011005"/>
<dbReference type="Ensembl" id="ENSRNOT00000011005.6">
    <property type="protein sequence ID" value="ENSRNOP00000011005.3"/>
    <property type="gene ID" value="ENSRNOG00000008176.6"/>
</dbReference>
<dbReference type="GeneID" id="24602"/>
<dbReference type="KEGG" id="rno:24602"/>
<dbReference type="UCSC" id="RGD:3193">
    <property type="organism name" value="rat"/>
</dbReference>
<dbReference type="AGR" id="RGD:3193"/>
<dbReference type="CTD" id="4878"/>
<dbReference type="RGD" id="3193">
    <property type="gene designation" value="Nppa"/>
</dbReference>
<dbReference type="eggNOG" id="ENOG502S9RQ">
    <property type="taxonomic scope" value="Eukaryota"/>
</dbReference>
<dbReference type="GeneTree" id="ENSGT00940000154513"/>
<dbReference type="HOGENOM" id="CLU_144536_0_0_1"/>
<dbReference type="InParanoid" id="P01161"/>
<dbReference type="OrthoDB" id="70241at9989"/>
<dbReference type="PhylomeDB" id="P01161"/>
<dbReference type="TreeFam" id="TF106304"/>
<dbReference type="Reactome" id="R-RNO-5578768">
    <property type="pathway name" value="Physiological factors"/>
</dbReference>
<dbReference type="EvolutionaryTrace" id="P01161"/>
<dbReference type="PRO" id="PR:P01161"/>
<dbReference type="Proteomes" id="UP000002494">
    <property type="component" value="Chromosome 5"/>
</dbReference>
<dbReference type="Bgee" id="ENSRNOG00000008176">
    <property type="expression patterns" value="Expressed in heart and 4 other cell types or tissues"/>
</dbReference>
<dbReference type="ExpressionAtlas" id="P01161">
    <property type="expression patterns" value="baseline and differential"/>
</dbReference>
<dbReference type="GO" id="GO:0005903">
    <property type="term" value="C:brush border"/>
    <property type="evidence" value="ECO:0000314"/>
    <property type="project" value="UniProtKB"/>
</dbReference>
<dbReference type="GO" id="GO:0042995">
    <property type="term" value="C:cell projection"/>
    <property type="evidence" value="ECO:0007669"/>
    <property type="project" value="UniProtKB-SubCell"/>
</dbReference>
<dbReference type="GO" id="GO:0005737">
    <property type="term" value="C:cytoplasm"/>
    <property type="evidence" value="ECO:0000266"/>
    <property type="project" value="RGD"/>
</dbReference>
<dbReference type="GO" id="GO:0005615">
    <property type="term" value="C:extracellular space"/>
    <property type="evidence" value="ECO:0000266"/>
    <property type="project" value="RGD"/>
</dbReference>
<dbReference type="GO" id="GO:0098690">
    <property type="term" value="C:glycinergic synapse"/>
    <property type="evidence" value="ECO:0000314"/>
    <property type="project" value="SynGO"/>
</dbReference>
<dbReference type="GO" id="GO:0042629">
    <property type="term" value="C:mast cell granule"/>
    <property type="evidence" value="ECO:0000314"/>
    <property type="project" value="RGD"/>
</dbReference>
<dbReference type="GO" id="GO:0043204">
    <property type="term" value="C:perikaryon"/>
    <property type="evidence" value="ECO:0007669"/>
    <property type="project" value="UniProtKB-SubCell"/>
</dbReference>
<dbReference type="GO" id="GO:0048471">
    <property type="term" value="C:perinuclear region of cytoplasm"/>
    <property type="evidence" value="ECO:0000314"/>
    <property type="project" value="RGD"/>
</dbReference>
<dbReference type="GO" id="GO:0032991">
    <property type="term" value="C:protein-containing complex"/>
    <property type="evidence" value="ECO:0000266"/>
    <property type="project" value="RGD"/>
</dbReference>
<dbReference type="GO" id="GO:0005179">
    <property type="term" value="F:hormone activity"/>
    <property type="evidence" value="ECO:0000314"/>
    <property type="project" value="RGD"/>
</dbReference>
<dbReference type="GO" id="GO:0051427">
    <property type="term" value="F:hormone receptor binding"/>
    <property type="evidence" value="ECO:0000266"/>
    <property type="project" value="RGD"/>
</dbReference>
<dbReference type="GO" id="GO:0005184">
    <property type="term" value="F:neuropeptide hormone activity"/>
    <property type="evidence" value="ECO:0000266"/>
    <property type="project" value="RGD"/>
</dbReference>
<dbReference type="GO" id="GO:0071855">
    <property type="term" value="F:neuropeptide receptor binding"/>
    <property type="evidence" value="ECO:0000266"/>
    <property type="project" value="RGD"/>
</dbReference>
<dbReference type="GO" id="GO:0005102">
    <property type="term" value="F:signaling receptor binding"/>
    <property type="evidence" value="ECO:0000314"/>
    <property type="project" value="RGD"/>
</dbReference>
<dbReference type="GO" id="GO:0014898">
    <property type="term" value="P:cardiac muscle hypertrophy in response to stress"/>
    <property type="evidence" value="ECO:0000266"/>
    <property type="project" value="RGD"/>
</dbReference>
<dbReference type="GO" id="GO:0061049">
    <property type="term" value="P:cell growth involved in cardiac muscle cell development"/>
    <property type="evidence" value="ECO:0000270"/>
    <property type="project" value="RGD"/>
</dbReference>
<dbReference type="GO" id="GO:1904385">
    <property type="term" value="P:cellular response to angiotensin"/>
    <property type="evidence" value="ECO:0000270"/>
    <property type="project" value="RGD"/>
</dbReference>
<dbReference type="GO" id="GO:0070301">
    <property type="term" value="P:cellular response to hydrogen peroxide"/>
    <property type="evidence" value="ECO:0000270"/>
    <property type="project" value="RGD"/>
</dbReference>
<dbReference type="GO" id="GO:0071260">
    <property type="term" value="P:cellular response to mechanical stimulus"/>
    <property type="evidence" value="ECO:0000270"/>
    <property type="project" value="RGD"/>
</dbReference>
<dbReference type="GO" id="GO:0006182">
    <property type="term" value="P:cGMP biosynthetic process"/>
    <property type="evidence" value="ECO:0000315"/>
    <property type="project" value="RGD"/>
</dbReference>
<dbReference type="GO" id="GO:0019934">
    <property type="term" value="P:cGMP-mediated signaling"/>
    <property type="evidence" value="ECO:0000314"/>
    <property type="project" value="RGD"/>
</dbReference>
<dbReference type="GO" id="GO:0007565">
    <property type="term" value="P:female pregnancy"/>
    <property type="evidence" value="ECO:0000250"/>
    <property type="project" value="UniProtKB"/>
</dbReference>
<dbReference type="GO" id="GO:0007507">
    <property type="term" value="P:heart development"/>
    <property type="evidence" value="ECO:0000304"/>
    <property type="project" value="UniProtKB"/>
</dbReference>
<dbReference type="GO" id="GO:0050891">
    <property type="term" value="P:multicellular organismal-level water homeostasis"/>
    <property type="evidence" value="ECO:0000304"/>
    <property type="project" value="RGD"/>
</dbReference>
<dbReference type="GO" id="GO:0045776">
    <property type="term" value="P:negative regulation of blood pressure"/>
    <property type="evidence" value="ECO:0000266"/>
    <property type="project" value="RGD"/>
</dbReference>
<dbReference type="GO" id="GO:0030308">
    <property type="term" value="P:negative regulation of cell growth"/>
    <property type="evidence" value="ECO:0000315"/>
    <property type="project" value="RGD"/>
</dbReference>
<dbReference type="GO" id="GO:1903815">
    <property type="term" value="P:negative regulation of collecting lymphatic vessel constriction"/>
    <property type="evidence" value="ECO:0000314"/>
    <property type="project" value="RGD"/>
</dbReference>
<dbReference type="GO" id="GO:0003085">
    <property type="term" value="P:negative regulation of systemic arterial blood pressure"/>
    <property type="evidence" value="ECO:0000314"/>
    <property type="project" value="RGD"/>
</dbReference>
<dbReference type="GO" id="GO:0007218">
    <property type="term" value="P:neuropeptide signaling pathway"/>
    <property type="evidence" value="ECO:0000266"/>
    <property type="project" value="RGD"/>
</dbReference>
<dbReference type="GO" id="GO:0060452">
    <property type="term" value="P:positive regulation of cardiac muscle contraction"/>
    <property type="evidence" value="ECO:0000266"/>
    <property type="project" value="RGD"/>
</dbReference>
<dbReference type="GO" id="GO:0010753">
    <property type="term" value="P:positive regulation of cGMP-mediated signaling"/>
    <property type="evidence" value="ECO:0000314"/>
    <property type="project" value="RGD"/>
</dbReference>
<dbReference type="GO" id="GO:1902261">
    <property type="term" value="P:positive regulation of delayed rectifier potassium channel activity"/>
    <property type="evidence" value="ECO:0000314"/>
    <property type="project" value="BHF-UCL"/>
</dbReference>
<dbReference type="GO" id="GO:0010460">
    <property type="term" value="P:positive regulation of heart rate"/>
    <property type="evidence" value="ECO:0000266"/>
    <property type="project" value="RGD"/>
</dbReference>
<dbReference type="GO" id="GO:1903766">
    <property type="term" value="P:positive regulation of potassium ion export across plasma membrane"/>
    <property type="evidence" value="ECO:0000314"/>
    <property type="project" value="BHF-UCL"/>
</dbReference>
<dbReference type="GO" id="GO:0006457">
    <property type="term" value="P:protein folding"/>
    <property type="evidence" value="ECO:0000266"/>
    <property type="project" value="RGD"/>
</dbReference>
<dbReference type="GO" id="GO:0007168">
    <property type="term" value="P:receptor guanylyl cyclase signaling pathway"/>
    <property type="evidence" value="ECO:0000314"/>
    <property type="project" value="MGI"/>
</dbReference>
<dbReference type="GO" id="GO:0060372">
    <property type="term" value="P:regulation of atrial cardiac muscle cell membrane repolarization"/>
    <property type="evidence" value="ECO:0000266"/>
    <property type="project" value="RGD"/>
</dbReference>
<dbReference type="GO" id="GO:0008217">
    <property type="term" value="P:regulation of blood pressure"/>
    <property type="evidence" value="ECO:0000250"/>
    <property type="project" value="UniProtKB"/>
</dbReference>
<dbReference type="GO" id="GO:0050878">
    <property type="term" value="P:regulation of body fluid levels"/>
    <property type="evidence" value="ECO:0000304"/>
    <property type="project" value="RGD"/>
</dbReference>
<dbReference type="GO" id="GO:1902514">
    <property type="term" value="P:regulation of calcium ion transmembrane transport via high voltage-gated calcium channel"/>
    <property type="evidence" value="ECO:0000314"/>
    <property type="project" value="BHF-UCL"/>
</dbReference>
<dbReference type="GO" id="GO:1901841">
    <property type="term" value="P:regulation of high voltage-gated calcium channel activity"/>
    <property type="evidence" value="ECO:0000314"/>
    <property type="project" value="BHF-UCL"/>
</dbReference>
<dbReference type="GO" id="GO:1904681">
    <property type="term" value="P:response to 3-methylcholanthrene"/>
    <property type="evidence" value="ECO:0000270"/>
    <property type="project" value="RGD"/>
</dbReference>
<dbReference type="GO" id="GO:0001666">
    <property type="term" value="P:response to hypoxia"/>
    <property type="evidence" value="ECO:0000270"/>
    <property type="project" value="RGD"/>
</dbReference>
<dbReference type="GO" id="GO:0032868">
    <property type="term" value="P:response to insulin"/>
    <property type="evidence" value="ECO:0000270"/>
    <property type="project" value="RGD"/>
</dbReference>
<dbReference type="GO" id="GO:0036376">
    <property type="term" value="P:sodium ion export across plasma membrane"/>
    <property type="evidence" value="ECO:0000266"/>
    <property type="project" value="RGD"/>
</dbReference>
<dbReference type="GO" id="GO:0099538">
    <property type="term" value="P:synaptic signaling via neuropeptide"/>
    <property type="evidence" value="ECO:0000314"/>
    <property type="project" value="SynGO"/>
</dbReference>
<dbReference type="GO" id="GO:0042311">
    <property type="term" value="P:vasodilation"/>
    <property type="evidence" value="ECO:0007669"/>
    <property type="project" value="UniProtKB-KW"/>
</dbReference>
<dbReference type="InterPro" id="IPR000663">
    <property type="entry name" value="Natr_peptide"/>
</dbReference>
<dbReference type="InterPro" id="IPR030480">
    <property type="entry name" value="Natr_peptide_CS"/>
</dbReference>
<dbReference type="InterPro" id="IPR050787">
    <property type="entry name" value="Natriuretic_peptide"/>
</dbReference>
<dbReference type="InterPro" id="IPR002407">
    <property type="entry name" value="Natriuretic_peptide_atrial"/>
</dbReference>
<dbReference type="PANTHER" id="PTHR14066">
    <property type="entry name" value="ATRIAL NATRIURETIC FACTOR PRECURSOR"/>
    <property type="match status" value="1"/>
</dbReference>
<dbReference type="PANTHER" id="PTHR14066:SF2">
    <property type="entry name" value="NATRIURETIC PEPTIDES A"/>
    <property type="match status" value="1"/>
</dbReference>
<dbReference type="Pfam" id="PF00212">
    <property type="entry name" value="ANP"/>
    <property type="match status" value="1"/>
</dbReference>
<dbReference type="PRINTS" id="PR00711">
    <property type="entry name" value="ANATPEPTIDE"/>
</dbReference>
<dbReference type="PRINTS" id="PR00710">
    <property type="entry name" value="NATPEPTIDES"/>
</dbReference>
<dbReference type="SMART" id="SM00183">
    <property type="entry name" value="NAT_PEP"/>
    <property type="match status" value="1"/>
</dbReference>
<dbReference type="PROSITE" id="PS00263">
    <property type="entry name" value="NATRIURETIC_PEPTIDE"/>
    <property type="match status" value="1"/>
</dbReference>
<comment type="function">
    <molecule>Atrial natriuretic peptide</molecule>
    <text evidence="1 2 4 13">Hormone that plays a key role in mediating cardio-renal homeostasis, and is involved in vascular remodeling and regulating energy metabolism (By similarity). Acts by specifically binding and stimulating NPR1 to produce cGMP, which in turn activates effector proteins, such as PRKG1, that drive various biological responses (PubMed:15117952). Regulates vasodilation, natriuresis, diuresis and aldosterone synthesis and is therefore essential for regulating blood pressure, controlling the extracellular fluid volume and maintaining the fluid-electrolyte balance (PubMed:7831500). Also involved in inhibiting cardiac remodeling and cardiac hypertrophy by inducing cardiomyocyte apoptosis and attenuating the growth of cardiomyocytes and fibroblasts (By similarity). Plays a role in female pregnancy by promoting trophoblast invasion and spiral artery remodeling in uterus, and thus prevents pregnancy-induced hypertension (By similarity). In adipose tissue, acts in various cGMP- and PKG-dependent pathways to regulate lipid metabolism and energy homeostasis (By similarity). This includes up-regulating lipid metabolism and mitochondrial oxygen utilization by activating the AMP-activated protein kinase (AMPK), and increasing energy expenditure by acting via MAPK11 to promote the UCP1-dependent thermogenesis of brown adipose tissue (By similarity). Binds the clearance receptor NPR3 which removes the hormone from circulation (By similarity).</text>
</comment>
<comment type="function">
    <molecule>Long-acting natriuretic peptide</molecule>
    <text evidence="1 13">May have a role in cardio-renal homeostasis through regulation of natriuresis, diuresis, vasodilation, and inhibiting aldosterone synthesis (By similarity). In vitro, promotes the production of cGMP and induces vasodilation (By similarity). May promote natriuresis, at least in part, by enhancing prostaglandin E2 synthesis resulting in the inhibition of renal Na+-K+-ATPase (By similarity). However reports on the involvement of this peptide in mammal blood volume and blood pressure homeostasis are conflicting; according to a report, in vivo it is not sufficient to activate cGMP and does not inhibit collecting duct transport nor effect diuresis and natriuresis (PubMed:7831500). Appears to bind to specific receptors that are distinct from the receptors bound by atrial natriuretic peptide and vessel dilator. Possibly enhances protein excretion in urine by decreasing proximal tubular protein reabsorption (By similarity).</text>
</comment>
<comment type="function">
    <molecule>Vessel dilator</molecule>
    <text evidence="1 13">May have a role in cardio-renal homeostasis through regulation of natriuresis, diuresis, and vasodilation (By similarity). In vitro, promotes the production of cGMP and induces vasodilation (By similarity). May promote natriuresis, at least in part, by enhancing prostaglandin E2 synthesis resulting in the inhibition of renal Na+-K+-ATPase (By similarity). However reports on the involvement of this peptide in mammal blood volume and blood pressure homeostasis are conflicting; according to a report, in vivo it is not sufficient to activate cGMP and does not inhibit collecting duct transport nor effect diuresis and natriuresis (PubMed:7831500). Appears to bind to specific receptors that are distinct from the receptors bound by the atrial natriuretic and long-acting natriuretic peptides (By similarity). Possibly functions in protein excretion in urine by maintaining the integrity of the proximal tubules and enhancing protein excretion by decreasing proximal tubular protein reabsorption (By similarity).</text>
</comment>
<comment type="function">
    <molecule>Kaliuretic peptide</molecule>
    <text evidence="1">May have a role in cardio-renal homeostasis through regulation of diuresis and inhibiting aldosterone synthesis. In vitro, promotes the production of cGMP and induces vasodilation. May promote natriuresis, at least in part, by enhancing prostaglandin E2 synthesis resulting in the inhibition of renal Na+-K+-ATPase. May have a role in potassium excretion but not sodium excretion (natriuresis). Possibly enhances protein excretion in urine by decreasing proximal tubular protein reabsorption.</text>
</comment>
<comment type="function">
    <molecule>Urodilatin</molecule>
    <text evidence="1">Hormone produced in the kidneys that appears to be important for maintaining cardio-renal homeostasis. Mediates vasodilation, natriuresis and diuresis primarily in the renal system, in order to maintain the extracellular fluid volume and control the fluid-electrolyte balance. Specifically binds and stimulates cGMP production by renal transmembrane receptors, likely NPR1. Urodilatin not ANP, may be the natriuretic peptide responsible for the regulation of sodium and water homeostasis in the kidney.</text>
</comment>
<comment type="function">
    <molecule>Auriculin-D</molecule>
    <text evidence="10">May have a role in cardio-renal homeostasis through regulation of natriuresis and vasodilation. In vivo promotes natriuresis and in vitro, vasodilates renal artery strips.</text>
</comment>
<comment type="function">
    <molecule>Auriculin-B</molecule>
    <text evidence="10">May have a role in cardio-renal homeostasis through regulation of natriuresis and vasodilation. In vivo promotes natriuresis and in vitro, vasodilates renal artery strips.</text>
</comment>
<comment type="function">
    <molecule>Auriculin-A</molecule>
    <text evidence="11">May have a role in cardio-renal homeostasis through regulation of regulation of natriuresis and vasodilation. In vivo promotes natriuresis. In vitro, vasodilates intestinal smooth muscle but not smooth muscle strips.</text>
</comment>
<comment type="function">
    <molecule>Atriopeptin-2</molecule>
    <text evidence="12">May have a role in cardio-renal homeostasis through regulation of natriuresis and vasodilation. In vivo promotes natriuresis. In vitro, selectively vasodilates intestinal and vascular smooth muscle strips.</text>
</comment>
<comment type="function">
    <molecule>Atriopeptin-1</molecule>
    <text evidence="12">May have a role in cardio-renal homeostasis through regulation of natriuresis and vasodilation. In vivo promotes natriuresis. In vitro, selectively vasodilates intestinal smooth muscle but not vascular smooth muscle strips.</text>
</comment>
<comment type="subunit">
    <molecule>Atrial natriuretic peptide</molecule>
    <text evidence="1">Homodimer; disulfide-linked antiparallel dimer.</text>
</comment>
<comment type="subcellular location">
    <molecule>Long-acting natriuretic peptide</molecule>
    <subcellularLocation>
        <location evidence="1">Secreted</location>
    </subcellularLocation>
    <text evidence="1">Detected in blood.</text>
</comment>
<comment type="subcellular location">
    <molecule>Vessel dilator</molecule>
    <subcellularLocation>
        <location evidence="1">Secreted</location>
    </subcellularLocation>
    <text evidence="1">Detected in blood.</text>
</comment>
<comment type="subcellular location">
    <molecule>Kaliuretic peptide</molecule>
    <subcellularLocation>
        <location evidence="1">Secreted</location>
    </subcellularLocation>
    <text evidence="1">Detected in blood.</text>
</comment>
<comment type="subcellular location">
    <molecule>Urodilatin</molecule>
    <subcellularLocation>
        <location evidence="1">Secreted</location>
    </subcellularLocation>
    <text evidence="1">Detected in urine. Not detected in blood. Increased electrolytes, osmolality and intracellular cAMP levels increase peptide secretion/excretion.</text>
</comment>
<comment type="subcellular location">
    <molecule>Atrial natriuretic peptide</molecule>
    <subcellularLocation>
        <location evidence="8 9">Secreted</location>
    </subcellularLocation>
    <subcellularLocation>
        <location evidence="1">Perikaryon</location>
    </subcellularLocation>
    <subcellularLocation>
        <location evidence="1">Cell projection</location>
    </subcellularLocation>
    <text evidence="1 8 9">Detected in blood (PubMed:2966345, PubMed:3160114). Detected in urine in one study (By similarity). However, in another study, was not detected in urine (By similarity). Detected in cytoplasmic bodies and neuronal processes of pyramidal neurons (layers II-VI) (By similarity). Increased secretion in response to the vasopressin AVP (PubMed:3160114). Also likely to be secreted in response to an increase in atrial pressure or atrial stretch (By similarity). In kidney cells, secretion increases in response to activated guanylyl cyclases and increased intracellular cAMP levels (By similarity). Plasma levels increase 15 minutes after a high-salt meal, and decrease back to normal plasma levels 1 hr later (By similarity).</text>
</comment>
<comment type="subcellular location">
    <molecule>Atriopeptin-3</molecule>
    <subcellularLocation>
        <location evidence="9">Secreted</location>
    </subcellularLocation>
    <text evidence="9">Detected in blood (PubMed:3160114). Slight increase in secretion in response to the vasopressin AVP (PubMed:3160114).</text>
</comment>
<comment type="tissue specificity">
    <text evidence="5">High levels of expression in the atria compared to the ventricles (PubMed:1837590). Very low levels of expression detected in extracardiac tissues such as the brain, hypothalamus, pituitary, lung and aorta (PubMed:1837590).</text>
</comment>
<comment type="tissue specificity">
    <molecule>Auriculin-A</molecule>
    <text evidence="11">Atria (at protein level).</text>
</comment>
<comment type="tissue specificity">
    <molecule>Auriculin-B</molecule>
    <text evidence="10">Atria (at protein level).</text>
</comment>
<comment type="tissue specificity">
    <molecule>Auriculin-C</molecule>
    <text evidence="10">Atria (at protein level).</text>
</comment>
<comment type="tissue specificity">
    <molecule>Auriculin-D</molecule>
    <text evidence="10">Atria (at protein level).</text>
</comment>
<comment type="tissue specificity">
    <molecule>Atrial natriuretic peptide</molecule>
    <text evidence="6">High levels of expression in the atria with very low levels of expression in the ventricles (at protein level) (PubMed:2525379). Relatively low levels of expression detected in the brain compared to the atria (at protein level) (PubMed:2525379).</text>
</comment>
<comment type="tissue specificity">
    <molecule>Atriopeptin-1</molecule>
    <text evidence="12">Atria (at protein level).</text>
</comment>
<comment type="tissue specificity">
    <molecule>Atriopeptin-2</molecule>
    <text evidence="12">Atria (at protein level).</text>
</comment>
<comment type="PTM">
    <text evidence="1 9 10 11 12">The precursor molecule is proteolytically cleaved by CORIN at Arg-122 to produce the atrial natriuretic peptide. Undergoes further proteolytic cleavage by unknown proteases to give rise to long-acting natriuretic peptide, vessel dilator and kaliuretic peptide (By similarity). Additional processing gives rise to the auriculin and atriopeptin peptides (PubMed:3160114, PubMed:6232612, PubMed:6233494, PubMed:6419347). In the kidneys, alternative processing by an unknown protease results in the peptide urodilatin (By similarity).</text>
</comment>
<comment type="PTM">
    <molecule>Atrial natriuretic peptide</molecule>
    <text evidence="1 7">Cleavage by MME initiates degradation of the factor and thereby regulates its activity (PubMed:2966343). Degradation by IDE results in reduced activation of NPR1 (in vitro) (By similarity). During IDE degradation, the resulting products can temporarily stimulate NPR2 to produce cGMP, before the fragments are completely degraded and inactivated by IDE (in vitro) (By similarity).</text>
</comment>
<comment type="PTM">
    <molecule>Urodilatin</molecule>
    <text evidence="1">Degraded by IDE.</text>
</comment>
<comment type="PTM">
    <molecule>Urodilatin</molecule>
    <text evidence="1">Phosphorylation on Ser-128 decreases vasorelaxant activity.</text>
</comment>
<comment type="similarity">
    <text evidence="21">Belongs to the natriuretic peptide family.</text>
</comment>
<comment type="caution">
    <molecule>Long-acting natriuretic peptide</molecule>
    <text evidence="1 13">Results concerning the involvement of this peptide in blood volume and blood pressure homeostasis are conflicting. Several studies utilising in vitro and heterologous expression systems show that it is able to activate cGMP and promote vasodilation and natriuresis (By similarity). However, an in vivo study found that it is not sufficient to induce any diuretic, natriuretic, nor hypotensive responses, and is unable to bind NPR1 nor increase guanylyl cyclase activity (PubMed:7831500).</text>
</comment>
<comment type="caution">
    <molecule>Vessel dilator</molecule>
    <text evidence="1 13">Results concerning the involvement of this peptide in blood volume and blood pressure homeostasis are conflicting. Several studies utilising in vitro and heterologous expression systems show that it is able to activate cGMP and promote vasodilation and natriuresis (By similarity). However, an in vivo study found that it is not sufficient to induce any diuretic, natriuretic, nor hypotensive responses, and is unable to bind NPR1 nor increase guanylyl cyclase activity (PubMed:7831500).</text>
</comment>
<reference key="1">
    <citation type="journal article" date="1984" name="Nature">
        <title>Cloning and sequence analysis of the cDNA for the rat atrial natriuretic factor precursor.</title>
        <authorList>
            <person name="Yamanaka M."/>
            <person name="Greenberg B."/>
            <person name="Johnson L."/>
            <person name="Seilhamer J.J."/>
            <person name="Brewer M."/>
            <person name="Friedemann T."/>
            <person name="Miller J."/>
            <person name="Atlas S.A."/>
            <person name="Laragh J."/>
            <person name="Lewicki J."/>
            <person name="Fiddes J.C."/>
        </authorList>
    </citation>
    <scope>NUCLEOTIDE SEQUENCE [GENOMIC DNA]</scope>
</reference>
<reference key="2">
    <citation type="journal article" date="1984" name="Nature">
        <title>Structure of rat atrial natriuretic factor precursor deduced from cDNA sequence.</title>
        <authorList>
            <person name="Maki M."/>
            <person name="Takayanagi R."/>
            <person name="Misono K.S."/>
            <person name="Pandey K.N."/>
            <person name="Tibbetts C."/>
            <person name="Inagami T."/>
        </authorList>
    </citation>
    <scope>NUCLEOTIDE SEQUENCE [GENOMIC DNA]</scope>
</reference>
<reference key="3">
    <citation type="journal article" date="1984" name="Science">
        <title>The structure of rat preproatrial natriuretic factor as defined by a complementary DNA clone.</title>
        <authorList>
            <person name="Seidman C.E."/>
            <person name="Duby A.D."/>
            <person name="Choi E."/>
            <person name="Graham R.M."/>
            <person name="Haber E."/>
            <person name="Homcy C."/>
            <person name="Smith J.A."/>
            <person name="Seidman J.G."/>
        </authorList>
    </citation>
    <scope>NUCLEOTIDE SEQUENCE [GENOMIC DNA]</scope>
</reference>
<reference key="4">
    <citation type="journal article" date="1984" name="Nature">
        <title>Identification of rat gamma atrial natriuretic polypeptide and characterization of the cDNA encoding its precursor.</title>
        <authorList>
            <person name="Kangawa K."/>
            <person name="Tawaragi Y."/>
            <person name="Oikawa S."/>
            <person name="Mizuno A."/>
            <person name="Sakuragawa Y."/>
            <person name="Nakazato H."/>
            <person name="Fukuda A."/>
            <person name="Minamino N."/>
            <person name="Matsuo H."/>
        </authorList>
    </citation>
    <scope>NUCLEOTIDE SEQUENCE [MRNA]</scope>
</reference>
<reference key="5">
    <citation type="journal article" date="1985" name="J. Biol. Chem.">
        <title>The gene for rat atrial natriuretic factor.</title>
        <authorList>
            <person name="Argentin S."/>
            <person name="Nemer M."/>
            <person name="Drouin J."/>
            <person name="Scott G.K."/>
            <person name="Kennedy B.P."/>
            <person name="Davies P.L."/>
        </authorList>
    </citation>
    <scope>NUCLEOTIDE SEQUENCE [GENOMIC DNA]</scope>
</reference>
<reference key="6">
    <citation type="journal article" date="1984" name="Proc. Natl. Acad. Sci. U.S.A.">
        <title>Molecular cloning and characterization of DNA sequences encoding rat and human atrial natriuretic factors.</title>
        <authorList>
            <person name="Zivin R.A."/>
            <person name="Condra J.H."/>
            <person name="Dixon R.A.F."/>
            <person name="Seidah N.G."/>
            <person name="Chretien M."/>
            <person name="Nemer M."/>
            <person name="Chamberland M."/>
            <person name="Drouin J."/>
        </authorList>
    </citation>
    <scope>NUCLEOTIDE SEQUENCE [GENOMIC DNA]</scope>
</reference>
<reference key="7">
    <citation type="journal article" date="1987" name="Can. J. Physiol. Pharmacol.">
        <title>The elucidation of the structure of atrial natriuretic factor, a new peptide hormone.</title>
        <authorList>
            <person name="Flynn T.G."/>
        </authorList>
    </citation>
    <scope>NUCLEOTIDE SEQUENCE [GENOMIC DNA]</scope>
</reference>
<reference key="8">
    <citation type="journal article" date="1991" name="Mol. Endocrinol.">
        <title>Differential expression of natriuretic peptide genes in cardiac and extracardiac tissues.</title>
        <authorList>
            <person name="Dagnino L."/>
            <person name="Drouin J."/>
            <person name="Nemer M."/>
        </authorList>
    </citation>
    <scope>NUCLEOTIDE SEQUENCE [GENOMIC DNA]</scope>
    <scope>TISSUE SPECIFICITY</scope>
</reference>
<reference key="9">
    <citation type="journal article" date="1987" name="Proc. Natl. Acad. Sci. U.S.A.">
        <title>Identification of atrial natriuretic factor gene transcripts in the central nervous system of the rat.</title>
        <authorList>
            <person name="Gardner D.G."/>
            <person name="Vlasuk G.P."/>
            <person name="Baxter J.D."/>
            <person name="Fiddes J.C."/>
            <person name="Lewicki J.A."/>
        </authorList>
    </citation>
    <scope>NUCLEOTIDE SEQUENCE [MRNA] OF 38-152</scope>
</reference>
<reference key="10">
    <citation type="journal article" date="1984" name="Nature">
        <title>Purification, sequencing and synthesis of natriuretic and vasoactive rat atrial peptide.</title>
        <authorList>
            <person name="Atlas S.A."/>
            <person name="Kleinert H.D."/>
            <person name="Camargo M.J."/>
            <person name="Januszewicz A."/>
            <person name="Sealey J.E."/>
            <person name="Laragh J.H."/>
            <person name="Schilling J.W."/>
            <person name="Lewicki J.A."/>
            <person name="Johnson L.K."/>
            <person name="Maack T."/>
        </authorList>
    </citation>
    <scope>PROTEIN SEQUENCE OF 126-149</scope>
    <scope>SYNTHESIS (AURICULIN-A)</scope>
    <scope>FUNCTION (AURICULIN-A)</scope>
    <scope>TISSUE SPECIFICITY (AURICULIN-A)</scope>
    <scope>PROTEOLYTIC PROCESSING (AURICULIN-A)</scope>
</reference>
<reference key="11">
    <citation type="journal article" date="1984" name="Science">
        <title>Purification and sequence analysis of bioactive atrial peptides (atriopeptins).</title>
        <authorList>
            <person name="Currie M.G."/>
            <person name="Geller D.M."/>
            <person name="Cole B.R."/>
            <person name="Siegel N.R."/>
            <person name="Fok K.F."/>
            <person name="Adams S.P."/>
            <person name="Eubanks S.R."/>
            <person name="Galluppi G.R."/>
            <person name="Needleman P."/>
        </authorList>
    </citation>
    <scope>PROTEIN SEQUENCE OF 127-150</scope>
    <scope>FUNCTION (ATRIOPEPTIN-1 AND ATRIOPEPTIN-2)</scope>
    <scope>TISSUE SPECIFICITY (ATRIOPEPTIN-1 AND ATRIOPEPTIN-2)</scope>
    <scope>PROTEOLYTIC PROCESSING (ATRIOPEPTIN-1 AND ATRIOPEPTIN-2)</scope>
</reference>
<reference key="12">
    <citation type="journal article" date="1984" name="Proc. Natl. Acad. Sci. U.S.A.">
        <title>Amino acid sequence of homologous rat atrial peptides: natriuretic activity of native and synthetic forms.</title>
        <authorList>
            <person name="Seidah N.G."/>
            <person name="Lazure C."/>
            <person name="Chretien M."/>
            <person name="Thibault G."/>
            <person name="Garcia R."/>
            <person name="Cantin M."/>
            <person name="Genest J."/>
            <person name="Nutt R.F."/>
            <person name="Brady S.F."/>
            <person name="Lyle T.A."/>
            <person name="Paleveda W.J."/>
            <person name="Colton C.D."/>
            <person name="Ciccarone T.M."/>
            <person name="Veber D.F."/>
        </authorList>
    </citation>
    <scope>PROTEIN SEQUENCE OF 118-150</scope>
    <scope>SYNTHESIS (AURICULIN-B)</scope>
    <scope>FUNCTION (AURICULIN-B AND AURICULIN-D)</scope>
    <scope>TISSUE SPECIFICITY (AURICULIN-B; AURICULIN-C AND AURICULIN-D)</scope>
    <scope>PROTEOLYTIC PROCESSING (AURICULIN-B; AURICULIN-C AND AURICULIN-D)</scope>
</reference>
<reference key="13">
    <citation type="journal article" date="1985" name="Science">
        <title>Ser-Leu-Arg-Arg-atriopeptin III: the major circulating form of atrial peptide.</title>
        <authorList>
            <person name="Schwartz D."/>
            <person name="Geller D.M."/>
            <person name="Manning P.T."/>
            <person name="Siegel N.R."/>
            <person name="Fok K.F."/>
            <person name="Smith C.E."/>
            <person name="Needleman P."/>
        </authorList>
    </citation>
    <scope>PROTEIN SEQUENCE OF 123-150</scope>
    <scope>SYNTHESIS (ATRIAL NATRIURETIC PEPTIDE AND ATRIOPEPTIN-3)</scope>
    <scope>SUBCELLULAR LOCATION (ATRIAL NATRIURETIC PEPTIDE AND ATRIOPEPTIN-3)</scope>
</reference>
<reference key="14">
    <citation type="journal article" date="1988" name="Peptides">
        <title>NH2-terminal fragment of rat pro-atrial natriuretic factor in the circulation: identification, radioimmunoassay and half-life.</title>
        <authorList>
            <person name="Thibault G."/>
            <person name="Murthy K.K."/>
            <person name="Gutkowska J."/>
            <person name="Seidah N.G."/>
            <person name="Lazure C."/>
            <person name="Chretien M."/>
            <person name="Cantin M."/>
        </authorList>
    </citation>
    <scope>PROTEIN SEQUENCE OF 25-38</scope>
    <scope>SYNTHESIS (ATRIAL NATRIURETIC PEPTIDE)</scope>
    <scope>SUBCELLULAR LOCATION (ATRIAL NATRIURETIC PEPTIDE)</scope>
</reference>
<reference key="15">
    <citation type="journal article" date="1989" name="Biochem. Biophys. Res. Commun.">
        <title>Occurrence of a novel cardiac natriuretic peptide in rats.</title>
        <authorList>
            <person name="Itoh H."/>
            <person name="Nakao K."/>
            <person name="Kambayashi Y."/>
            <person name="Hosoda K."/>
            <person name="Saito Y."/>
            <person name="Yamada T."/>
            <person name="Mukoyama M."/>
            <person name="Arai H."/>
            <person name="Shirakami G."/>
            <person name="Suga S."/>
            <person name="Yoshida I."/>
            <person name="Inouye K."/>
            <person name="Imura H."/>
        </authorList>
    </citation>
    <scope>PROTEIN SEQUENCE OF 99-115</scope>
    <scope>TISSUE SPECIFICITY (ATRIAL NATRIURETIC PEPTIDE)</scope>
</reference>
<reference key="16">
    <citation type="journal article" date="1988" name="Peptides">
        <title>Identification of protease 3.4.24.11 as the major atrial natriuretic factor degrading enzyme in the rat kidney.</title>
        <authorList>
            <person name="Sonnenberg J.L."/>
            <person name="Sakane Y."/>
            <person name="Jeng A.Y."/>
            <person name="Koehn J.A."/>
            <person name="Ansell J.A."/>
            <person name="Wennogle L.P."/>
            <person name="Ghai R.D."/>
        </authorList>
    </citation>
    <scope>PROTEOLYTIC PROCESSING BY MME (ATRIAL NATRIURETIC PEPTIDE)</scope>
    <scope>CLEAVAGE SITE</scope>
</reference>
<reference key="17">
    <citation type="journal article" date="1994" name="Regul. Pept.">
        <title>Lack of biologic activity or specific binding of amino-terminal pro-ANP segments in the rat.</title>
        <authorList>
            <person name="Weir M.L."/>
            <person name="Honrath U."/>
            <person name="Flynn T.G."/>
            <person name="Sonnenberg H."/>
        </authorList>
    </citation>
    <scope>SYNTHESIS (LONG-ACTING NATRIURETIC PEPTIDE AND VESSEL DILATOR)</scope>
    <scope>FUNCTION (LONG-ACTING NATRIURETIC PEPTIDE; VESSEL DILATOR AND ATRIAL NATRIURETIC PEPTIDE)</scope>
</reference>
<reference key="18">
    <citation type="journal article" date="2012" name="Nat. Commun.">
        <title>Quantitative maps of protein phosphorylation sites across 14 different rat organs and tissues.</title>
        <authorList>
            <person name="Lundby A."/>
            <person name="Secher A."/>
            <person name="Lage K."/>
            <person name="Nordsborg N.B."/>
            <person name="Dmytriyev A."/>
            <person name="Lundby C."/>
            <person name="Olsen J.V."/>
        </authorList>
    </citation>
    <scope>IDENTIFICATION BY MASS SPECTROMETRY [LARGE SCALE ANALYSIS]</scope>
</reference>
<reference key="19">
    <citation type="journal article" date="2004" name="J. Biol. Chem.">
        <title>Crystal structure of hormone-bound atrial natriuretic peptide receptor extracellular domain: rotation mechanism for transmembrane signal transduction.</title>
        <authorList>
            <person name="Ogawa H."/>
            <person name="Qiu Y."/>
            <person name="Ogata C.M."/>
            <person name="Misono K.S."/>
        </authorList>
    </citation>
    <scope>X-RAY CRYSTALLOGRAPHY (2.95 ANGSTROMS) OF 129-149 IN COMPLEX WITH NPR1</scope>
    <scope>RECEPTOR-BINDING (ATRIAL NATRIURETIC PEPTIDE)</scope>
    <scope>DISULFIDE BOND</scope>
</reference>
<sequence length="152" mass="16556">MGSFSITKGFFLFLAFWLPGHIGANPVYSAVSNTDLMDFKNLLDHLEEKMPVEDEVMPPQALSEQTDEAGAALSSLSEVPPWTGEVNPSQRDGGALGRGPWDPSDRSALLKSKLRALLAGPRSLRRSSCFGGRIDRIGAQSGLGCNSFRYRR</sequence>
<keyword id="KW-0002">3D-structure</keyword>
<keyword id="KW-0966">Cell projection</keyword>
<keyword id="KW-0165">Cleavage on pair of basic residues</keyword>
<keyword id="KW-0903">Direct protein sequencing</keyword>
<keyword id="KW-1015">Disulfide bond</keyword>
<keyword id="KW-0372">Hormone</keyword>
<keyword id="KW-0597">Phosphoprotein</keyword>
<keyword id="KW-1185">Reference proteome</keyword>
<keyword id="KW-0964">Secreted</keyword>
<keyword id="KW-0732">Signal</keyword>
<keyword id="KW-0838">Vasoactive</keyword>
<keyword id="KW-0840">Vasodilator</keyword>
<accession>P01161</accession>
<gene>
    <name type="primary">Nppa</name>
</gene>
<protein>
    <recommendedName>
        <fullName evidence="21">Natriuretic peptides A</fullName>
    </recommendedName>
    <alternativeName>
        <fullName evidence="1">Atrial natriuretic factor prohormone</fullName>
        <shortName evidence="17">preproANF</shortName>
        <shortName evidence="1">proANF</shortName>
    </alternativeName>
    <alternativeName>
        <fullName evidence="1">Atrial natriuretic peptide prohormone</fullName>
        <shortName evidence="1">preproANP</shortName>
        <shortName evidence="20">proANP</shortName>
    </alternativeName>
    <alternativeName>
        <fullName evidence="18">Atriopeptigen</fullName>
    </alternativeName>
    <alternativeName>
        <fullName evidence="1">Cardiodilatin</fullName>
        <shortName evidence="1">CDD</shortName>
    </alternativeName>
    <alternativeName>
        <fullName evidence="1">preproCDD-ANF</fullName>
    </alternativeName>
    <component>
        <recommendedName>
            <fullName evidence="1">Long-acting natriuretic peptide</fullName>
            <shortName evidence="1">LANP</shortName>
        </recommendedName>
        <alternativeName>
            <fullName evidence="21">Long-acting natriuretic hormone</fullName>
            <shortName evidence="21">LANH</shortName>
        </alternativeName>
        <alternativeName>
            <fullName evidence="1">Pro atrial natriuretic factor 1-30</fullName>
            <shortName evidence="1">proANF 1-30</shortName>
        </alternativeName>
        <alternativeName>
            <fullName evidence="21">Pro atrial natriuretic peptide 1-30</fullName>
            <shortName evidence="21">proANP 1-30</shortName>
        </alternativeName>
    </component>
    <component>
        <recommendedName>
            <fullName evidence="1">Vessel dilator</fullName>
            <shortName evidence="1">VSDL</shortName>
        </recommendedName>
        <alternativeName>
            <fullName evidence="1">Pro atrial natriuretic factor 31-67</fullName>
            <shortName evidence="1">proANF 31-67</shortName>
        </alternativeName>
        <alternativeName>
            <fullName evidence="21">Pro atrial natriuretic peptide 31-67</fullName>
            <shortName evidence="21">proANP 31-67</shortName>
        </alternativeName>
    </component>
    <component>
        <recommendedName>
            <fullName evidence="1">Kaliuretic peptide</fullName>
            <shortName evidence="1">KP</shortName>
        </recommendedName>
        <alternativeName>
            <fullName evidence="1">Pro atrial natriuretic factor 79-98</fullName>
            <shortName evidence="1">proANF 79-98</shortName>
        </alternativeName>
        <alternativeName>
            <fullName evidence="21">Pro atrial natriuretic peptide 79-98</fullName>
            <shortName evidence="21">proANP 79-98</shortName>
        </alternativeName>
    </component>
    <component>
        <recommendedName>
            <fullName evidence="1">Urodilatin</fullName>
            <shortName evidence="1">URO</shortName>
        </recommendedName>
        <alternativeName>
            <fullName evidence="1">CDD 95-126</fullName>
        </alternativeName>
        <alternativeName>
            <fullName evidence="1">CDD-ANP (95-126)</fullName>
        </alternativeName>
        <alternativeName>
            <fullName evidence="1">Pro atrial natriuretic peptide 95-126</fullName>
            <shortName evidence="1">proANP 95-126</shortName>
        </alternativeName>
    </component>
    <component>
        <recommendedName>
            <fullName evidence="21">Auriculin-C</fullName>
        </recommendedName>
        <alternativeName>
            <fullName evidence="15">Atrial natriuretic factor 1-33</fullName>
            <shortName evidence="15">ANF 1-33</shortName>
        </alternativeName>
    </component>
    <component>
        <recommendedName>
            <fullName evidence="21">Auriculin-D</fullName>
        </recommendedName>
        <alternativeName>
            <fullName evidence="15">Atrial natriuretic factor 3-33</fullName>
            <shortName evidence="15">ANF 3-33</shortName>
        </alternativeName>
    </component>
    <component>
        <recommendedName>
            <fullName evidence="1">Atrial natriuretic peptide</fullName>
            <shortName evidence="1">ANP</shortName>
        </recommendedName>
        <alternativeName>
            <fullName evidence="1">Alpha-atrial natriuretic peptide</fullName>
        </alternativeName>
        <alternativeName>
            <fullName evidence="1">Alpha-hANP</fullName>
        </alternativeName>
        <alternativeName>
            <fullName evidence="19">Atrial natriuretic factor</fullName>
            <shortName evidence="19">ANF</shortName>
        </alternativeName>
        <alternativeName>
            <fullName evidence="1">CDD-ANF</fullName>
        </alternativeName>
        <alternativeName>
            <fullName evidence="1">CDD-ANP (99-126)</fullName>
        </alternativeName>
        <alternativeName>
            <fullName evidence="14">Cardionatrin</fullName>
        </alternativeName>
        <alternativeName>
            <fullName evidence="1">Pro atrial natriuretic factor 99-126</fullName>
            <shortName evidence="1">proANF 99-126</shortName>
        </alternativeName>
    </component>
    <component>
        <recommendedName>
            <fullName evidence="21">Auriculin-B</fullName>
        </recommendedName>
        <alternativeName>
            <fullName evidence="15">Atrial natriuretic factor 8-33</fullName>
            <shortName evidence="15">ANF 8-33</shortName>
        </alternativeName>
    </component>
    <component>
        <recommendedName>
            <fullName evidence="16">Auriculin-A</fullName>
        </recommendedName>
    </component>
    <component>
        <recommendedName>
            <fullName evidence="18">Atriopeptin-1</fullName>
        </recommendedName>
        <alternativeName>
            <fullName evidence="18">Atriopeptin I</fullName>
        </alternativeName>
    </component>
    <component>
        <recommendedName>
            <fullName evidence="18">Atriopeptin-2</fullName>
        </recommendedName>
        <alternativeName>
            <fullName evidence="18">Atriopeptin II</fullName>
        </alternativeName>
    </component>
    <component>
        <recommendedName>
            <fullName evidence="14">Atriopeptin-3</fullName>
        </recommendedName>
        <alternativeName>
            <fullName evidence="14">Atriopeptin III</fullName>
        </alternativeName>
    </component>
</protein>
<name>ANF_RAT</name>
<proteinExistence type="evidence at protein level"/>
<organism>
    <name type="scientific">Rattus norvegicus</name>
    <name type="common">Rat</name>
    <dbReference type="NCBI Taxonomy" id="10116"/>
    <lineage>
        <taxon>Eukaryota</taxon>
        <taxon>Metazoa</taxon>
        <taxon>Chordata</taxon>
        <taxon>Craniata</taxon>
        <taxon>Vertebrata</taxon>
        <taxon>Euteleostomi</taxon>
        <taxon>Mammalia</taxon>
        <taxon>Eutheria</taxon>
        <taxon>Euarchontoglires</taxon>
        <taxon>Glires</taxon>
        <taxon>Rodentia</taxon>
        <taxon>Myomorpha</taxon>
        <taxon>Muroidea</taxon>
        <taxon>Muridae</taxon>
        <taxon>Murinae</taxon>
        <taxon>Rattus</taxon>
    </lineage>
</organism>
<feature type="signal peptide" evidence="8">
    <location>
        <begin position="1"/>
        <end position="24"/>
    </location>
</feature>
<feature type="chain" id="PRO_0000449770" description="Natriuretic peptides A" evidence="1">
    <location>
        <begin position="25"/>
        <end position="150"/>
    </location>
</feature>
<feature type="propeptide" id="PRO_0000001505" evidence="21">
    <location>
        <begin position="25"/>
        <end position="122"/>
    </location>
</feature>
<feature type="peptide" id="PRO_0000449771" description="Long-acting natriuretic peptide" evidence="1">
    <location>
        <begin position="25"/>
        <end position="54"/>
    </location>
</feature>
<feature type="peptide" id="PRO_0000449772" description="Vessel dilator" evidence="1">
    <location>
        <begin position="55"/>
        <end position="91"/>
    </location>
</feature>
<feature type="propeptide" id="PRO_0000449773" evidence="1">
    <location>
        <begin position="92"/>
        <end position="102"/>
    </location>
</feature>
<feature type="peptide" id="PRO_0000449774" description="Kaliuretic peptide" evidence="1">
    <location>
        <begin position="103"/>
        <end position="122"/>
    </location>
</feature>
<feature type="peptide" id="PRO_0000449776" description="Auriculin-C" evidence="10">
    <location>
        <begin position="118"/>
        <end position="150"/>
    </location>
</feature>
<feature type="peptide" id="PRO_0000449775" description="Urodilatin" evidence="1">
    <location>
        <begin position="119"/>
        <end position="150"/>
    </location>
</feature>
<feature type="peptide" id="PRO_0000449777" description="Auriculin-D" evidence="10">
    <location>
        <begin position="120"/>
        <end position="144"/>
    </location>
</feature>
<feature type="peptide" id="PRO_0000391785" description="Atrial natriuretic peptide" evidence="1">
    <location>
        <begin position="123"/>
        <end position="150"/>
    </location>
</feature>
<feature type="peptide" id="PRO_0000001506" description="Auriculin-B" evidence="10">
    <location>
        <begin position="126"/>
        <end position="150"/>
    </location>
</feature>
<feature type="peptide" id="PRO_0000001507" description="Auriculin-A" evidence="11">
    <location>
        <begin position="126"/>
        <end position="149"/>
    </location>
</feature>
<feature type="peptide" id="PRO_0000001508" description="Atriopeptin-3" evidence="9">
    <location>
        <begin position="127"/>
        <end position="150"/>
    </location>
</feature>
<feature type="peptide" id="PRO_0000001509" description="Atriopeptin-2" evidence="12">
    <location>
        <begin position="127"/>
        <end position="149"/>
    </location>
</feature>
<feature type="peptide" id="PRO_0000001510" description="Atriopeptin-1" evidence="12">
    <location>
        <begin position="127"/>
        <end position="147"/>
    </location>
</feature>
<feature type="region of interest" description="Disordered" evidence="3">
    <location>
        <begin position="54"/>
        <end position="104"/>
    </location>
</feature>
<feature type="region of interest" description="Important for degradation of atrial natriuretic peptide by IDE" evidence="1">
    <location>
        <begin position="146"/>
        <end position="150"/>
    </location>
</feature>
<feature type="site" description="Cleavage; by CORIN" evidence="1">
    <location>
        <begin position="122"/>
        <end position="123"/>
    </location>
</feature>
<feature type="site" description="Cleavage; by MME" evidence="7">
    <location>
        <begin position="129"/>
        <end position="130"/>
    </location>
</feature>
<feature type="modified residue" description="Phosphoserine" evidence="1">
    <location>
        <position position="128"/>
    </location>
</feature>
<feature type="disulfide bond" evidence="4">
    <location>
        <begin position="129"/>
        <end position="145"/>
    </location>
</feature>
<feature type="strand" evidence="22">
    <location>
        <begin position="128"/>
        <end position="130"/>
    </location>
</feature>
<feature type="helix" evidence="22">
    <location>
        <begin position="136"/>
        <end position="138"/>
    </location>
</feature>
<feature type="strand" evidence="22">
    <location>
        <begin position="143"/>
        <end position="145"/>
    </location>
</feature>
<evidence type="ECO:0000250" key="1">
    <source>
        <dbReference type="UniProtKB" id="P01160"/>
    </source>
</evidence>
<evidence type="ECO:0000250" key="2">
    <source>
        <dbReference type="UniProtKB" id="P05125"/>
    </source>
</evidence>
<evidence type="ECO:0000256" key="3">
    <source>
        <dbReference type="SAM" id="MobiDB-lite"/>
    </source>
</evidence>
<evidence type="ECO:0000269" key="4">
    <source>
    </source>
</evidence>
<evidence type="ECO:0000269" key="5">
    <source>
    </source>
</evidence>
<evidence type="ECO:0000269" key="6">
    <source>
    </source>
</evidence>
<evidence type="ECO:0000269" key="7">
    <source>
    </source>
</evidence>
<evidence type="ECO:0000269" key="8">
    <source>
    </source>
</evidence>
<evidence type="ECO:0000269" key="9">
    <source>
    </source>
</evidence>
<evidence type="ECO:0000269" key="10">
    <source>
    </source>
</evidence>
<evidence type="ECO:0000269" key="11">
    <source>
    </source>
</evidence>
<evidence type="ECO:0000269" key="12">
    <source>
    </source>
</evidence>
<evidence type="ECO:0000269" key="13">
    <source>
    </source>
</evidence>
<evidence type="ECO:0000303" key="14">
    <source>
    </source>
</evidence>
<evidence type="ECO:0000303" key="15">
    <source>
    </source>
</evidence>
<evidence type="ECO:0000303" key="16">
    <source>
    </source>
</evidence>
<evidence type="ECO:0000303" key="17">
    <source>
    </source>
</evidence>
<evidence type="ECO:0000303" key="18">
    <source>
    </source>
</evidence>
<evidence type="ECO:0000303" key="19">
    <source>
    </source>
</evidence>
<evidence type="ECO:0000303" key="20">
    <source>
    </source>
</evidence>
<evidence type="ECO:0000305" key="21"/>
<evidence type="ECO:0007829" key="22">
    <source>
        <dbReference type="PDB" id="7BRG"/>
    </source>
</evidence>